<gene>
    <name evidence="1" type="primary">rpsR</name>
    <name type="ordered locus">cgR_0980</name>
</gene>
<dbReference type="EMBL" id="AP009044">
    <property type="protein sequence ID" value="BAF53955.1"/>
    <property type="molecule type" value="Genomic_DNA"/>
</dbReference>
<dbReference type="RefSeq" id="WP_003858407.1">
    <property type="nucleotide sequence ID" value="NC_009342.1"/>
</dbReference>
<dbReference type="SMR" id="A4QCK8"/>
<dbReference type="GeneID" id="1018860"/>
<dbReference type="KEGG" id="cgt:cgR_0980"/>
<dbReference type="HOGENOM" id="CLU_148710_1_0_11"/>
<dbReference type="PhylomeDB" id="A4QCK8"/>
<dbReference type="Proteomes" id="UP000006698">
    <property type="component" value="Chromosome"/>
</dbReference>
<dbReference type="GO" id="GO:0022627">
    <property type="term" value="C:cytosolic small ribosomal subunit"/>
    <property type="evidence" value="ECO:0007669"/>
    <property type="project" value="TreeGrafter"/>
</dbReference>
<dbReference type="GO" id="GO:0070181">
    <property type="term" value="F:small ribosomal subunit rRNA binding"/>
    <property type="evidence" value="ECO:0007669"/>
    <property type="project" value="TreeGrafter"/>
</dbReference>
<dbReference type="GO" id="GO:0003735">
    <property type="term" value="F:structural constituent of ribosome"/>
    <property type="evidence" value="ECO:0007669"/>
    <property type="project" value="InterPro"/>
</dbReference>
<dbReference type="GO" id="GO:0006412">
    <property type="term" value="P:translation"/>
    <property type="evidence" value="ECO:0007669"/>
    <property type="project" value="UniProtKB-UniRule"/>
</dbReference>
<dbReference type="Gene3D" id="4.10.640.10">
    <property type="entry name" value="Ribosomal protein S18"/>
    <property type="match status" value="1"/>
</dbReference>
<dbReference type="HAMAP" id="MF_00270">
    <property type="entry name" value="Ribosomal_bS18"/>
    <property type="match status" value="1"/>
</dbReference>
<dbReference type="InterPro" id="IPR001648">
    <property type="entry name" value="Ribosomal_bS18"/>
</dbReference>
<dbReference type="InterPro" id="IPR018275">
    <property type="entry name" value="Ribosomal_bS18_CS"/>
</dbReference>
<dbReference type="InterPro" id="IPR036870">
    <property type="entry name" value="Ribosomal_bS18_sf"/>
</dbReference>
<dbReference type="NCBIfam" id="TIGR00165">
    <property type="entry name" value="S18"/>
    <property type="match status" value="1"/>
</dbReference>
<dbReference type="PANTHER" id="PTHR13479">
    <property type="entry name" value="30S RIBOSOMAL PROTEIN S18"/>
    <property type="match status" value="1"/>
</dbReference>
<dbReference type="PANTHER" id="PTHR13479:SF40">
    <property type="entry name" value="SMALL RIBOSOMAL SUBUNIT PROTEIN BS18M"/>
    <property type="match status" value="1"/>
</dbReference>
<dbReference type="Pfam" id="PF01084">
    <property type="entry name" value="Ribosomal_S18"/>
    <property type="match status" value="1"/>
</dbReference>
<dbReference type="PRINTS" id="PR00974">
    <property type="entry name" value="RIBOSOMALS18"/>
</dbReference>
<dbReference type="SUPFAM" id="SSF46911">
    <property type="entry name" value="Ribosomal protein S18"/>
    <property type="match status" value="1"/>
</dbReference>
<dbReference type="PROSITE" id="PS00057">
    <property type="entry name" value="RIBOSOMAL_S18"/>
    <property type="match status" value="1"/>
</dbReference>
<accession>A4QCK8</accession>
<sequence>MKQRNNAKRVRLEQTRRPKKNPLKAAGIEKVDYKDINTLRQFISDRHKIRSRRVTGLTPQQQREVATAVKNAREMALLPFTSR</sequence>
<proteinExistence type="inferred from homology"/>
<reference key="1">
    <citation type="journal article" date="2007" name="Microbiology">
        <title>Comparative analysis of the Corynebacterium glutamicum group and complete genome sequence of strain R.</title>
        <authorList>
            <person name="Yukawa H."/>
            <person name="Omumasaba C.A."/>
            <person name="Nonaka H."/>
            <person name="Kos P."/>
            <person name="Okai N."/>
            <person name="Suzuki N."/>
            <person name="Suda M."/>
            <person name="Tsuge Y."/>
            <person name="Watanabe J."/>
            <person name="Ikeda Y."/>
            <person name="Vertes A.A."/>
            <person name="Inui M."/>
        </authorList>
    </citation>
    <scope>NUCLEOTIDE SEQUENCE [LARGE SCALE GENOMIC DNA]</scope>
    <source>
        <strain>R</strain>
    </source>
</reference>
<evidence type="ECO:0000255" key="1">
    <source>
        <dbReference type="HAMAP-Rule" id="MF_00270"/>
    </source>
</evidence>
<evidence type="ECO:0000256" key="2">
    <source>
        <dbReference type="SAM" id="MobiDB-lite"/>
    </source>
</evidence>
<evidence type="ECO:0000305" key="3"/>
<keyword id="KW-0687">Ribonucleoprotein</keyword>
<keyword id="KW-0689">Ribosomal protein</keyword>
<keyword id="KW-0694">RNA-binding</keyword>
<keyword id="KW-0699">rRNA-binding</keyword>
<comment type="function">
    <text evidence="1">Binds as a heterodimer with protein bS6 to the central domain of the 16S rRNA, where it helps stabilize the platform of the 30S subunit.</text>
</comment>
<comment type="subunit">
    <text evidence="1">Part of the 30S ribosomal subunit. Forms a tight heterodimer with protein bS6.</text>
</comment>
<comment type="similarity">
    <text evidence="1">Belongs to the bacterial ribosomal protein bS18 family.</text>
</comment>
<protein>
    <recommendedName>
        <fullName evidence="1">Small ribosomal subunit protein bS18</fullName>
    </recommendedName>
    <alternativeName>
        <fullName evidence="3">30S ribosomal protein S18</fullName>
    </alternativeName>
</protein>
<feature type="chain" id="PRO_1000003491" description="Small ribosomal subunit protein bS18">
    <location>
        <begin position="1"/>
        <end position="83"/>
    </location>
</feature>
<feature type="region of interest" description="Disordered" evidence="2">
    <location>
        <begin position="1"/>
        <end position="23"/>
    </location>
</feature>
<organism>
    <name type="scientific">Corynebacterium glutamicum (strain R)</name>
    <dbReference type="NCBI Taxonomy" id="340322"/>
    <lineage>
        <taxon>Bacteria</taxon>
        <taxon>Bacillati</taxon>
        <taxon>Actinomycetota</taxon>
        <taxon>Actinomycetes</taxon>
        <taxon>Mycobacteriales</taxon>
        <taxon>Corynebacteriaceae</taxon>
        <taxon>Corynebacterium</taxon>
    </lineage>
</organism>
<name>RS18_CORGB</name>